<sequence length="103" mass="10870">MAAVSLSVSTVKPLGDRVFVKVSASEEKTAGGLYLPDTAKEKPQVGEVVALGAGKRNDDGSRQELEVKVGDKVLYSKYAGTDVKLGTEEYVLLSEKDILAVVG</sequence>
<comment type="function">
    <text evidence="1">Together with the chaperonin GroEL, plays an essential role in assisting protein folding. The GroEL-GroES system forms a nano-cage that allows encapsulation of the non-native substrate proteins and provides a physical environment optimized to promote and accelerate protein folding. GroES binds to the apical surface of the GroEL ring, thereby capping the opening of the GroEL channel.</text>
</comment>
<comment type="subunit">
    <text evidence="1">Heptamer of 7 subunits arranged in a ring. Interacts with the chaperonin GroEL.</text>
</comment>
<comment type="subcellular location">
    <subcellularLocation>
        <location evidence="1">Cytoplasm</location>
    </subcellularLocation>
</comment>
<comment type="similarity">
    <text evidence="1">Belongs to the GroES chaperonin family.</text>
</comment>
<gene>
    <name evidence="1" type="primary">groES</name>
    <name evidence="1" type="synonym">groS</name>
    <name type="ordered locus">alr3661</name>
</gene>
<organism>
    <name type="scientific">Nostoc sp. (strain PCC 7120 / SAG 25.82 / UTEX 2576)</name>
    <dbReference type="NCBI Taxonomy" id="103690"/>
    <lineage>
        <taxon>Bacteria</taxon>
        <taxon>Bacillati</taxon>
        <taxon>Cyanobacteriota</taxon>
        <taxon>Cyanophyceae</taxon>
        <taxon>Nostocales</taxon>
        <taxon>Nostocaceae</taxon>
        <taxon>Nostoc</taxon>
    </lineage>
</organism>
<keyword id="KW-0143">Chaperone</keyword>
<keyword id="KW-0963">Cytoplasm</keyword>
<keyword id="KW-1185">Reference proteome</keyword>
<protein>
    <recommendedName>
        <fullName evidence="1">Co-chaperonin GroES</fullName>
    </recommendedName>
    <alternativeName>
        <fullName evidence="1">10 kDa chaperonin</fullName>
    </alternativeName>
    <alternativeName>
        <fullName evidence="1">Chaperonin-10</fullName>
        <shortName evidence="1">Cpn10</shortName>
    </alternativeName>
</protein>
<dbReference type="EMBL" id="BA000019">
    <property type="protein sequence ID" value="BAB75360.1"/>
    <property type="molecule type" value="Genomic_DNA"/>
</dbReference>
<dbReference type="PIR" id="AF2263">
    <property type="entry name" value="AF2263"/>
</dbReference>
<dbReference type="RefSeq" id="WP_010997805.1">
    <property type="nucleotide sequence ID" value="NZ_RSCN01000044.1"/>
</dbReference>
<dbReference type="SMR" id="Q8YQZ9"/>
<dbReference type="STRING" id="103690.gene:10495703"/>
<dbReference type="GeneID" id="58726426"/>
<dbReference type="KEGG" id="ana:alr3661"/>
<dbReference type="eggNOG" id="COG0234">
    <property type="taxonomic scope" value="Bacteria"/>
</dbReference>
<dbReference type="OrthoDB" id="9806791at2"/>
<dbReference type="Proteomes" id="UP000002483">
    <property type="component" value="Chromosome"/>
</dbReference>
<dbReference type="GO" id="GO:0005737">
    <property type="term" value="C:cytoplasm"/>
    <property type="evidence" value="ECO:0007669"/>
    <property type="project" value="UniProtKB-SubCell"/>
</dbReference>
<dbReference type="GO" id="GO:0005524">
    <property type="term" value="F:ATP binding"/>
    <property type="evidence" value="ECO:0007669"/>
    <property type="project" value="InterPro"/>
</dbReference>
<dbReference type="GO" id="GO:0046872">
    <property type="term" value="F:metal ion binding"/>
    <property type="evidence" value="ECO:0007669"/>
    <property type="project" value="TreeGrafter"/>
</dbReference>
<dbReference type="GO" id="GO:0044183">
    <property type="term" value="F:protein folding chaperone"/>
    <property type="evidence" value="ECO:0007669"/>
    <property type="project" value="InterPro"/>
</dbReference>
<dbReference type="GO" id="GO:0051087">
    <property type="term" value="F:protein-folding chaperone binding"/>
    <property type="evidence" value="ECO:0007669"/>
    <property type="project" value="TreeGrafter"/>
</dbReference>
<dbReference type="GO" id="GO:0051082">
    <property type="term" value="F:unfolded protein binding"/>
    <property type="evidence" value="ECO:0007669"/>
    <property type="project" value="TreeGrafter"/>
</dbReference>
<dbReference type="GO" id="GO:0051085">
    <property type="term" value="P:chaperone cofactor-dependent protein refolding"/>
    <property type="evidence" value="ECO:0007669"/>
    <property type="project" value="TreeGrafter"/>
</dbReference>
<dbReference type="CDD" id="cd00320">
    <property type="entry name" value="cpn10"/>
    <property type="match status" value="1"/>
</dbReference>
<dbReference type="FunFam" id="2.30.33.40:FF:000001">
    <property type="entry name" value="10 kDa chaperonin"/>
    <property type="match status" value="1"/>
</dbReference>
<dbReference type="Gene3D" id="2.30.33.40">
    <property type="entry name" value="GroES chaperonin"/>
    <property type="match status" value="1"/>
</dbReference>
<dbReference type="HAMAP" id="MF_00580">
    <property type="entry name" value="CH10"/>
    <property type="match status" value="1"/>
</dbReference>
<dbReference type="InterPro" id="IPR020818">
    <property type="entry name" value="Chaperonin_GroES"/>
</dbReference>
<dbReference type="InterPro" id="IPR037124">
    <property type="entry name" value="Chaperonin_GroES_sf"/>
</dbReference>
<dbReference type="InterPro" id="IPR018369">
    <property type="entry name" value="Chaprnonin_Cpn10_CS"/>
</dbReference>
<dbReference type="InterPro" id="IPR011032">
    <property type="entry name" value="GroES-like_sf"/>
</dbReference>
<dbReference type="NCBIfam" id="NF001530">
    <property type="entry name" value="PRK00364.1-6"/>
    <property type="match status" value="1"/>
</dbReference>
<dbReference type="NCBIfam" id="NF001531">
    <property type="entry name" value="PRK00364.2-2"/>
    <property type="match status" value="1"/>
</dbReference>
<dbReference type="NCBIfam" id="NF001533">
    <property type="entry name" value="PRK00364.2-4"/>
    <property type="match status" value="1"/>
</dbReference>
<dbReference type="NCBIfam" id="NF001534">
    <property type="entry name" value="PRK00364.2-5"/>
    <property type="match status" value="1"/>
</dbReference>
<dbReference type="PANTHER" id="PTHR10772">
    <property type="entry name" value="10 KDA HEAT SHOCK PROTEIN"/>
    <property type="match status" value="1"/>
</dbReference>
<dbReference type="PANTHER" id="PTHR10772:SF58">
    <property type="entry name" value="CO-CHAPERONIN GROES"/>
    <property type="match status" value="1"/>
</dbReference>
<dbReference type="Pfam" id="PF00166">
    <property type="entry name" value="Cpn10"/>
    <property type="match status" value="1"/>
</dbReference>
<dbReference type="PRINTS" id="PR00297">
    <property type="entry name" value="CHAPERONIN10"/>
</dbReference>
<dbReference type="SMART" id="SM00883">
    <property type="entry name" value="Cpn10"/>
    <property type="match status" value="1"/>
</dbReference>
<dbReference type="SUPFAM" id="SSF50129">
    <property type="entry name" value="GroES-like"/>
    <property type="match status" value="1"/>
</dbReference>
<dbReference type="PROSITE" id="PS00681">
    <property type="entry name" value="CHAPERONINS_CPN10"/>
    <property type="match status" value="1"/>
</dbReference>
<accession>Q8YQZ9</accession>
<evidence type="ECO:0000255" key="1">
    <source>
        <dbReference type="HAMAP-Rule" id="MF_00580"/>
    </source>
</evidence>
<reference key="1">
    <citation type="journal article" date="2001" name="DNA Res.">
        <title>Complete genomic sequence of the filamentous nitrogen-fixing cyanobacterium Anabaena sp. strain PCC 7120.</title>
        <authorList>
            <person name="Kaneko T."/>
            <person name="Nakamura Y."/>
            <person name="Wolk C.P."/>
            <person name="Kuritz T."/>
            <person name="Sasamoto S."/>
            <person name="Watanabe A."/>
            <person name="Iriguchi M."/>
            <person name="Ishikawa A."/>
            <person name="Kawashima K."/>
            <person name="Kimura T."/>
            <person name="Kishida Y."/>
            <person name="Kohara M."/>
            <person name="Matsumoto M."/>
            <person name="Matsuno A."/>
            <person name="Muraki A."/>
            <person name="Nakazaki N."/>
            <person name="Shimpo S."/>
            <person name="Sugimoto M."/>
            <person name="Takazawa M."/>
            <person name="Yamada M."/>
            <person name="Yasuda M."/>
            <person name="Tabata S."/>
        </authorList>
    </citation>
    <scope>NUCLEOTIDE SEQUENCE [LARGE SCALE GENOMIC DNA]</scope>
    <source>
        <strain>PCC 7120 / SAG 25.82 / UTEX 2576</strain>
    </source>
</reference>
<name>CH10_NOSS1</name>
<proteinExistence type="inferred from homology"/>
<feature type="chain" id="PRO_0000174686" description="Co-chaperonin GroES">
    <location>
        <begin position="1"/>
        <end position="103"/>
    </location>
</feature>